<dbReference type="EC" id="4.2.1.59" evidence="1"/>
<dbReference type="EMBL" id="CP000246">
    <property type="protein sequence ID" value="ABG83550.1"/>
    <property type="molecule type" value="Genomic_DNA"/>
</dbReference>
<dbReference type="RefSeq" id="WP_003448879.1">
    <property type="nucleotide sequence ID" value="NC_008261.1"/>
</dbReference>
<dbReference type="SMR" id="Q0TRG5"/>
<dbReference type="STRING" id="195103.CPF_1329"/>
<dbReference type="PaxDb" id="195103-CPF_1329"/>
<dbReference type="GeneID" id="93002358"/>
<dbReference type="KEGG" id="cpf:CPF_1329"/>
<dbReference type="eggNOG" id="COG0764">
    <property type="taxonomic scope" value="Bacteria"/>
</dbReference>
<dbReference type="HOGENOM" id="CLU_078912_3_0_9"/>
<dbReference type="Proteomes" id="UP000001823">
    <property type="component" value="Chromosome"/>
</dbReference>
<dbReference type="GO" id="GO:0005737">
    <property type="term" value="C:cytoplasm"/>
    <property type="evidence" value="ECO:0007669"/>
    <property type="project" value="UniProtKB-SubCell"/>
</dbReference>
<dbReference type="GO" id="GO:0016020">
    <property type="term" value="C:membrane"/>
    <property type="evidence" value="ECO:0007669"/>
    <property type="project" value="GOC"/>
</dbReference>
<dbReference type="GO" id="GO:0019171">
    <property type="term" value="F:(3R)-hydroxyacyl-[acyl-carrier-protein] dehydratase activity"/>
    <property type="evidence" value="ECO:0007669"/>
    <property type="project" value="UniProtKB-EC"/>
</dbReference>
<dbReference type="GO" id="GO:0006633">
    <property type="term" value="P:fatty acid biosynthetic process"/>
    <property type="evidence" value="ECO:0007669"/>
    <property type="project" value="UniProtKB-UniRule"/>
</dbReference>
<dbReference type="GO" id="GO:0009245">
    <property type="term" value="P:lipid A biosynthetic process"/>
    <property type="evidence" value="ECO:0007669"/>
    <property type="project" value="UniProtKB-UniRule"/>
</dbReference>
<dbReference type="CDD" id="cd01288">
    <property type="entry name" value="FabZ"/>
    <property type="match status" value="1"/>
</dbReference>
<dbReference type="FunFam" id="3.10.129.10:FF:000001">
    <property type="entry name" value="3-hydroxyacyl-[acyl-carrier-protein] dehydratase FabZ"/>
    <property type="match status" value="1"/>
</dbReference>
<dbReference type="Gene3D" id="3.10.129.10">
    <property type="entry name" value="Hotdog Thioesterase"/>
    <property type="match status" value="1"/>
</dbReference>
<dbReference type="HAMAP" id="MF_00406">
    <property type="entry name" value="FabZ"/>
    <property type="match status" value="1"/>
</dbReference>
<dbReference type="InterPro" id="IPR013114">
    <property type="entry name" value="FabA_FabZ"/>
</dbReference>
<dbReference type="InterPro" id="IPR010084">
    <property type="entry name" value="FabZ"/>
</dbReference>
<dbReference type="InterPro" id="IPR029069">
    <property type="entry name" value="HotDog_dom_sf"/>
</dbReference>
<dbReference type="NCBIfam" id="TIGR01750">
    <property type="entry name" value="fabZ"/>
    <property type="match status" value="1"/>
</dbReference>
<dbReference type="NCBIfam" id="NF000582">
    <property type="entry name" value="PRK00006.1"/>
    <property type="match status" value="1"/>
</dbReference>
<dbReference type="PANTHER" id="PTHR30272">
    <property type="entry name" value="3-HYDROXYACYL-[ACYL-CARRIER-PROTEIN] DEHYDRATASE"/>
    <property type="match status" value="1"/>
</dbReference>
<dbReference type="PANTHER" id="PTHR30272:SF1">
    <property type="entry name" value="3-HYDROXYACYL-[ACYL-CARRIER-PROTEIN] DEHYDRATASE"/>
    <property type="match status" value="1"/>
</dbReference>
<dbReference type="Pfam" id="PF07977">
    <property type="entry name" value="FabA"/>
    <property type="match status" value="1"/>
</dbReference>
<dbReference type="SUPFAM" id="SSF54637">
    <property type="entry name" value="Thioesterase/thiol ester dehydrase-isomerase"/>
    <property type="match status" value="1"/>
</dbReference>
<sequence length="139" mass="15382">MMNINEIKEILPHRYPFLLVDKVEEITESKVVAYKNVTINEPFFQGHFPDYPVMPGVLIVEALAQAGAIALLNKEEFKGKTPFFAGIDKVRFKKQVLPGDTLRLEVEIIKLRGSIGFGKATATVDGKIACSGEIMFAIG</sequence>
<name>FABZ_CLOP1</name>
<accession>Q0TRG5</accession>
<proteinExistence type="inferred from homology"/>
<evidence type="ECO:0000255" key="1">
    <source>
        <dbReference type="HAMAP-Rule" id="MF_00406"/>
    </source>
</evidence>
<gene>
    <name evidence="1" type="primary">fabZ</name>
    <name type="ordered locus">CPF_1329</name>
</gene>
<reference key="1">
    <citation type="journal article" date="2006" name="Genome Res.">
        <title>Skewed genomic variability in strains of the toxigenic bacterial pathogen, Clostridium perfringens.</title>
        <authorList>
            <person name="Myers G.S.A."/>
            <person name="Rasko D.A."/>
            <person name="Cheung J.K."/>
            <person name="Ravel J."/>
            <person name="Seshadri R."/>
            <person name="DeBoy R.T."/>
            <person name="Ren Q."/>
            <person name="Varga J."/>
            <person name="Awad M.M."/>
            <person name="Brinkac L.M."/>
            <person name="Daugherty S.C."/>
            <person name="Haft D.H."/>
            <person name="Dodson R.J."/>
            <person name="Madupu R."/>
            <person name="Nelson W.C."/>
            <person name="Rosovitz M.J."/>
            <person name="Sullivan S.A."/>
            <person name="Khouri H."/>
            <person name="Dimitrov G.I."/>
            <person name="Watkins K.L."/>
            <person name="Mulligan S."/>
            <person name="Benton J."/>
            <person name="Radune D."/>
            <person name="Fisher D.J."/>
            <person name="Atkins H.S."/>
            <person name="Hiscox T."/>
            <person name="Jost B.H."/>
            <person name="Billington S.J."/>
            <person name="Songer J.G."/>
            <person name="McClane B.A."/>
            <person name="Titball R.W."/>
            <person name="Rood J.I."/>
            <person name="Melville S.B."/>
            <person name="Paulsen I.T."/>
        </authorList>
    </citation>
    <scope>NUCLEOTIDE SEQUENCE [LARGE SCALE GENOMIC DNA]</scope>
    <source>
        <strain>ATCC 13124 / DSM 756 / JCM 1290 / NCIMB 6125 / NCTC 8237 / S 107 / Type A</strain>
    </source>
</reference>
<feature type="chain" id="PRO_0000301888" description="3-hydroxyacyl-[acyl-carrier-protein] dehydratase FabZ">
    <location>
        <begin position="1"/>
        <end position="139"/>
    </location>
</feature>
<feature type="active site" evidence="1">
    <location>
        <position position="47"/>
    </location>
</feature>
<organism>
    <name type="scientific">Clostridium perfringens (strain ATCC 13124 / DSM 756 / JCM 1290 / NCIMB 6125 / NCTC 8237 / Type A)</name>
    <dbReference type="NCBI Taxonomy" id="195103"/>
    <lineage>
        <taxon>Bacteria</taxon>
        <taxon>Bacillati</taxon>
        <taxon>Bacillota</taxon>
        <taxon>Clostridia</taxon>
        <taxon>Eubacteriales</taxon>
        <taxon>Clostridiaceae</taxon>
        <taxon>Clostridium</taxon>
    </lineage>
</organism>
<keyword id="KW-0963">Cytoplasm</keyword>
<keyword id="KW-0441">Lipid A biosynthesis</keyword>
<keyword id="KW-0444">Lipid biosynthesis</keyword>
<keyword id="KW-0443">Lipid metabolism</keyword>
<keyword id="KW-0456">Lyase</keyword>
<protein>
    <recommendedName>
        <fullName evidence="1">3-hydroxyacyl-[acyl-carrier-protein] dehydratase FabZ</fullName>
        <ecNumber evidence="1">4.2.1.59</ecNumber>
    </recommendedName>
    <alternativeName>
        <fullName evidence="1">(3R)-hydroxymyristoyl-[acyl-carrier-protein] dehydratase</fullName>
        <shortName evidence="1">(3R)-hydroxymyristoyl-ACP dehydrase</shortName>
    </alternativeName>
    <alternativeName>
        <fullName evidence="1">Beta-hydroxyacyl-ACP dehydratase</fullName>
    </alternativeName>
</protein>
<comment type="function">
    <text evidence="1">Involved in unsaturated fatty acids biosynthesis. Catalyzes the dehydration of short chain beta-hydroxyacyl-ACPs and long chain saturated and unsaturated beta-hydroxyacyl-ACPs.</text>
</comment>
<comment type="catalytic activity">
    <reaction evidence="1">
        <text>a (3R)-hydroxyacyl-[ACP] = a (2E)-enoyl-[ACP] + H2O</text>
        <dbReference type="Rhea" id="RHEA:13097"/>
        <dbReference type="Rhea" id="RHEA-COMP:9925"/>
        <dbReference type="Rhea" id="RHEA-COMP:9945"/>
        <dbReference type="ChEBI" id="CHEBI:15377"/>
        <dbReference type="ChEBI" id="CHEBI:78784"/>
        <dbReference type="ChEBI" id="CHEBI:78827"/>
        <dbReference type="EC" id="4.2.1.59"/>
    </reaction>
</comment>
<comment type="subcellular location">
    <subcellularLocation>
        <location evidence="1">Cytoplasm</location>
    </subcellularLocation>
</comment>
<comment type="similarity">
    <text evidence="1">Belongs to the thioester dehydratase family. FabZ subfamily.</text>
</comment>